<evidence type="ECO:0000255" key="1">
    <source>
        <dbReference type="HAMAP-Rule" id="MF_00658"/>
    </source>
</evidence>
<keyword id="KW-0963">Cytoplasm</keyword>
<keyword id="KW-0489">Methyltransferase</keyword>
<keyword id="KW-1185">Reference proteome</keyword>
<keyword id="KW-0698">rRNA processing</keyword>
<keyword id="KW-0949">S-adenosyl-L-methionine</keyword>
<keyword id="KW-0808">Transferase</keyword>
<sequence length="159" mass="17973">MQIDIIAPGRVKERYLRDAIDEYSKRLSRYCKLNIIEVADEKTPDHASEGVDRQIKAREGERIAKHLKDGAFVIALAINGKQLSSEELAAKINDLGLRGTSHIQLVIGGSIGLDDAILRRADFLLSFSKMTFPHQLMRVILLEQIYRAYKINAGEPYHK</sequence>
<accession>Q8G4X1</accession>
<reference key="1">
    <citation type="journal article" date="2002" name="Proc. Natl. Acad. Sci. U.S.A.">
        <title>The genome sequence of Bifidobacterium longum reflects its adaptation to the human gastrointestinal tract.</title>
        <authorList>
            <person name="Schell M.A."/>
            <person name="Karmirantzou M."/>
            <person name="Snel B."/>
            <person name="Vilanova D."/>
            <person name="Berger B."/>
            <person name="Pessi G."/>
            <person name="Zwahlen M.-C."/>
            <person name="Desiere F."/>
            <person name="Bork P."/>
            <person name="Delley M."/>
            <person name="Pridmore R.D."/>
            <person name="Arigoni F."/>
        </authorList>
    </citation>
    <scope>NUCLEOTIDE SEQUENCE [LARGE SCALE GENOMIC DNA]</scope>
    <source>
        <strain>NCC 2705</strain>
    </source>
</reference>
<feature type="chain" id="PRO_0000198094" description="Ribosomal RNA large subunit methyltransferase H">
    <location>
        <begin position="1"/>
        <end position="159"/>
    </location>
</feature>
<feature type="binding site" evidence="1">
    <location>
        <position position="76"/>
    </location>
    <ligand>
        <name>S-adenosyl-L-methionine</name>
        <dbReference type="ChEBI" id="CHEBI:59789"/>
    </ligand>
</feature>
<feature type="binding site" evidence="1">
    <location>
        <position position="108"/>
    </location>
    <ligand>
        <name>S-adenosyl-L-methionine</name>
        <dbReference type="ChEBI" id="CHEBI:59789"/>
    </ligand>
</feature>
<feature type="binding site" evidence="1">
    <location>
        <begin position="127"/>
        <end position="132"/>
    </location>
    <ligand>
        <name>S-adenosyl-L-methionine</name>
        <dbReference type="ChEBI" id="CHEBI:59789"/>
    </ligand>
</feature>
<gene>
    <name evidence="1" type="primary">rlmH</name>
    <name type="ordered locus">BL1253</name>
</gene>
<dbReference type="EC" id="2.1.1.177" evidence="1"/>
<dbReference type="EMBL" id="AE014295">
    <property type="protein sequence ID" value="AAN25054.1"/>
    <property type="molecule type" value="Genomic_DNA"/>
</dbReference>
<dbReference type="RefSeq" id="NP_696418.1">
    <property type="nucleotide sequence ID" value="NC_004307.2"/>
</dbReference>
<dbReference type="RefSeq" id="WP_007053094.1">
    <property type="nucleotide sequence ID" value="NC_004307.2"/>
</dbReference>
<dbReference type="SMR" id="Q8G4X1"/>
<dbReference type="STRING" id="206672.BL1253"/>
<dbReference type="EnsemblBacteria" id="AAN25054">
    <property type="protein sequence ID" value="AAN25054"/>
    <property type="gene ID" value="BL1253"/>
</dbReference>
<dbReference type="GeneID" id="69578996"/>
<dbReference type="KEGG" id="blo:BL1253"/>
<dbReference type="PATRIC" id="fig|206672.9.peg.1538"/>
<dbReference type="HOGENOM" id="CLU_100552_0_0_11"/>
<dbReference type="OrthoDB" id="9806643at2"/>
<dbReference type="PhylomeDB" id="Q8G4X1"/>
<dbReference type="Proteomes" id="UP000000439">
    <property type="component" value="Chromosome"/>
</dbReference>
<dbReference type="GO" id="GO:0005737">
    <property type="term" value="C:cytoplasm"/>
    <property type="evidence" value="ECO:0007669"/>
    <property type="project" value="UniProtKB-SubCell"/>
</dbReference>
<dbReference type="GO" id="GO:0070038">
    <property type="term" value="F:rRNA (pseudouridine-N3-)-methyltransferase activity"/>
    <property type="evidence" value="ECO:0007669"/>
    <property type="project" value="UniProtKB-UniRule"/>
</dbReference>
<dbReference type="CDD" id="cd18081">
    <property type="entry name" value="RlmH-like"/>
    <property type="match status" value="1"/>
</dbReference>
<dbReference type="Gene3D" id="3.40.1280.10">
    <property type="match status" value="1"/>
</dbReference>
<dbReference type="HAMAP" id="MF_00658">
    <property type="entry name" value="23SrRNA_methyltr_H"/>
    <property type="match status" value="1"/>
</dbReference>
<dbReference type="InterPro" id="IPR029028">
    <property type="entry name" value="Alpha/beta_knot_MTases"/>
</dbReference>
<dbReference type="InterPro" id="IPR003742">
    <property type="entry name" value="RlmH-like"/>
</dbReference>
<dbReference type="InterPro" id="IPR029026">
    <property type="entry name" value="tRNA_m1G_MTases_N"/>
</dbReference>
<dbReference type="NCBIfam" id="NF000985">
    <property type="entry name" value="PRK00103.1-3"/>
    <property type="match status" value="1"/>
</dbReference>
<dbReference type="NCBIfam" id="TIGR00246">
    <property type="entry name" value="tRNA_RlmH_YbeA"/>
    <property type="match status" value="1"/>
</dbReference>
<dbReference type="PANTHER" id="PTHR33603">
    <property type="entry name" value="METHYLTRANSFERASE"/>
    <property type="match status" value="1"/>
</dbReference>
<dbReference type="PANTHER" id="PTHR33603:SF1">
    <property type="entry name" value="RIBOSOMAL RNA LARGE SUBUNIT METHYLTRANSFERASE H"/>
    <property type="match status" value="1"/>
</dbReference>
<dbReference type="Pfam" id="PF02590">
    <property type="entry name" value="SPOUT_MTase"/>
    <property type="match status" value="1"/>
</dbReference>
<dbReference type="PIRSF" id="PIRSF004505">
    <property type="entry name" value="MT_bac"/>
    <property type="match status" value="1"/>
</dbReference>
<dbReference type="SUPFAM" id="SSF75217">
    <property type="entry name" value="alpha/beta knot"/>
    <property type="match status" value="1"/>
</dbReference>
<organism>
    <name type="scientific">Bifidobacterium longum (strain NCC 2705)</name>
    <dbReference type="NCBI Taxonomy" id="206672"/>
    <lineage>
        <taxon>Bacteria</taxon>
        <taxon>Bacillati</taxon>
        <taxon>Actinomycetota</taxon>
        <taxon>Actinomycetes</taxon>
        <taxon>Bifidobacteriales</taxon>
        <taxon>Bifidobacteriaceae</taxon>
        <taxon>Bifidobacterium</taxon>
    </lineage>
</organism>
<proteinExistence type="inferred from homology"/>
<name>RLMH_BIFLO</name>
<comment type="function">
    <text evidence="1">Specifically methylates the pseudouridine at position 1915 (m3Psi1915) in 23S rRNA.</text>
</comment>
<comment type="catalytic activity">
    <reaction evidence="1">
        <text>pseudouridine(1915) in 23S rRNA + S-adenosyl-L-methionine = N(3)-methylpseudouridine(1915) in 23S rRNA + S-adenosyl-L-homocysteine + H(+)</text>
        <dbReference type="Rhea" id="RHEA:42752"/>
        <dbReference type="Rhea" id="RHEA-COMP:10221"/>
        <dbReference type="Rhea" id="RHEA-COMP:10222"/>
        <dbReference type="ChEBI" id="CHEBI:15378"/>
        <dbReference type="ChEBI" id="CHEBI:57856"/>
        <dbReference type="ChEBI" id="CHEBI:59789"/>
        <dbReference type="ChEBI" id="CHEBI:65314"/>
        <dbReference type="ChEBI" id="CHEBI:74486"/>
        <dbReference type="EC" id="2.1.1.177"/>
    </reaction>
</comment>
<comment type="subunit">
    <text evidence="1">Homodimer.</text>
</comment>
<comment type="subcellular location">
    <subcellularLocation>
        <location evidence="1">Cytoplasm</location>
    </subcellularLocation>
</comment>
<comment type="similarity">
    <text evidence="1">Belongs to the RNA methyltransferase RlmH family.</text>
</comment>
<protein>
    <recommendedName>
        <fullName evidence="1">Ribosomal RNA large subunit methyltransferase H</fullName>
        <ecNumber evidence="1">2.1.1.177</ecNumber>
    </recommendedName>
    <alternativeName>
        <fullName evidence="1">23S rRNA (pseudouridine1915-N3)-methyltransferase</fullName>
    </alternativeName>
    <alternativeName>
        <fullName evidence="1">23S rRNA m3Psi1915 methyltransferase</fullName>
    </alternativeName>
    <alternativeName>
        <fullName evidence="1">rRNA (pseudouridine-N3-)-methyltransferase RlmH</fullName>
    </alternativeName>
</protein>